<keyword id="KW-0963">Cytoplasm</keyword>
<keyword id="KW-0206">Cytoskeleton</keyword>
<keyword id="KW-0256">Endoplasmic reticulum</keyword>
<keyword id="KW-0333">Golgi apparatus</keyword>
<keyword id="KW-0539">Nucleus</keyword>
<keyword id="KW-1185">Reference proteome</keyword>
<organism>
    <name type="scientific">Xenopus laevis</name>
    <name type="common">African clawed frog</name>
    <dbReference type="NCBI Taxonomy" id="8355"/>
    <lineage>
        <taxon>Eukaryota</taxon>
        <taxon>Metazoa</taxon>
        <taxon>Chordata</taxon>
        <taxon>Craniata</taxon>
        <taxon>Vertebrata</taxon>
        <taxon>Euteleostomi</taxon>
        <taxon>Amphibia</taxon>
        <taxon>Batrachia</taxon>
        <taxon>Anura</taxon>
        <taxon>Pipoidea</taxon>
        <taxon>Pipidae</taxon>
        <taxon>Xenopodinae</taxon>
        <taxon>Xenopus</taxon>
        <taxon>Xenopus</taxon>
    </lineage>
</organism>
<evidence type="ECO:0000250" key="1">
    <source>
        <dbReference type="UniProtKB" id="P0C627"/>
    </source>
</evidence>
<evidence type="ECO:0000250" key="2">
    <source>
        <dbReference type="UniProtKB" id="Q0KL01"/>
    </source>
</evidence>
<evidence type="ECO:0000250" key="3">
    <source>
        <dbReference type="UniProtKB" id="Q14CS0"/>
    </source>
</evidence>
<evidence type="ECO:0000255" key="4">
    <source>
        <dbReference type="PROSITE-ProRule" id="PRU00215"/>
    </source>
</evidence>
<evidence type="ECO:0000255" key="5">
    <source>
        <dbReference type="PROSITE-ProRule" id="PRU00732"/>
    </source>
</evidence>
<evidence type="ECO:0000256" key="6">
    <source>
        <dbReference type="SAM" id="MobiDB-lite"/>
    </source>
</evidence>
<evidence type="ECO:0000305" key="7"/>
<dbReference type="EMBL" id="BC087473">
    <property type="protein sequence ID" value="AAH87473.1"/>
    <property type="molecule type" value="mRNA"/>
</dbReference>
<dbReference type="EMBL" id="BC122501">
    <property type="protein sequence ID" value="AAI22502.1"/>
    <property type="molecule type" value="mRNA"/>
</dbReference>
<dbReference type="RefSeq" id="NP_001088797.1">
    <property type="nucleotide sequence ID" value="NM_001095328.1"/>
</dbReference>
<dbReference type="SMR" id="Q0P3R5"/>
<dbReference type="DNASU" id="496062"/>
<dbReference type="GeneID" id="496062"/>
<dbReference type="KEGG" id="xla:496062"/>
<dbReference type="AGR" id="Xenbase:XB-GENE-6252818"/>
<dbReference type="CTD" id="496062"/>
<dbReference type="Xenbase" id="XB-GENE-6252818">
    <property type="gene designation" value="ubxn2b.L"/>
</dbReference>
<dbReference type="OMA" id="REVLHCN"/>
<dbReference type="OrthoDB" id="25887at2759"/>
<dbReference type="Proteomes" id="UP000186698">
    <property type="component" value="Chromosome 6L"/>
</dbReference>
<dbReference type="Bgee" id="496062">
    <property type="expression patterns" value="Expressed in brain and 19 other cell types or tissues"/>
</dbReference>
<dbReference type="GO" id="GO:0005813">
    <property type="term" value="C:centrosome"/>
    <property type="evidence" value="ECO:0007669"/>
    <property type="project" value="UniProtKB-SubCell"/>
</dbReference>
<dbReference type="GO" id="GO:0005829">
    <property type="term" value="C:cytosol"/>
    <property type="evidence" value="ECO:0000318"/>
    <property type="project" value="GO_Central"/>
</dbReference>
<dbReference type="GO" id="GO:0005783">
    <property type="term" value="C:endoplasmic reticulum"/>
    <property type="evidence" value="ECO:0007669"/>
    <property type="project" value="UniProtKB-SubCell"/>
</dbReference>
<dbReference type="GO" id="GO:0005794">
    <property type="term" value="C:Golgi apparatus"/>
    <property type="evidence" value="ECO:0007669"/>
    <property type="project" value="UniProtKB-SubCell"/>
</dbReference>
<dbReference type="GO" id="GO:0005634">
    <property type="term" value="C:nucleus"/>
    <property type="evidence" value="ECO:0000318"/>
    <property type="project" value="GO_Central"/>
</dbReference>
<dbReference type="GO" id="GO:0043130">
    <property type="term" value="F:ubiquitin binding"/>
    <property type="evidence" value="ECO:0000318"/>
    <property type="project" value="GO_Central"/>
</dbReference>
<dbReference type="GO" id="GO:0000045">
    <property type="term" value="P:autophagosome assembly"/>
    <property type="evidence" value="ECO:0000318"/>
    <property type="project" value="GO_Central"/>
</dbReference>
<dbReference type="GO" id="GO:0007030">
    <property type="term" value="P:Golgi organization"/>
    <property type="evidence" value="ECO:0000318"/>
    <property type="project" value="GO_Central"/>
</dbReference>
<dbReference type="GO" id="GO:0061025">
    <property type="term" value="P:membrane fusion"/>
    <property type="evidence" value="ECO:0000318"/>
    <property type="project" value="GO_Central"/>
</dbReference>
<dbReference type="GO" id="GO:0031468">
    <property type="term" value="P:nuclear membrane reassembly"/>
    <property type="evidence" value="ECO:0000318"/>
    <property type="project" value="GO_Central"/>
</dbReference>
<dbReference type="GO" id="GO:0043161">
    <property type="term" value="P:proteasome-mediated ubiquitin-dependent protein catabolic process"/>
    <property type="evidence" value="ECO:0000318"/>
    <property type="project" value="GO_Central"/>
</dbReference>
<dbReference type="FunFam" id="3.30.420.210:FF:000001">
    <property type="entry name" value="NSFL1 (P97) cofactor (P47)"/>
    <property type="match status" value="1"/>
</dbReference>
<dbReference type="Gene3D" id="3.10.20.90">
    <property type="entry name" value="Phosphatidylinositol 3-kinase Catalytic Subunit, Chain A, domain 1"/>
    <property type="match status" value="1"/>
</dbReference>
<dbReference type="Gene3D" id="3.30.420.210">
    <property type="entry name" value="SEP domain"/>
    <property type="match status" value="1"/>
</dbReference>
<dbReference type="InterPro" id="IPR036241">
    <property type="entry name" value="NSFL1C_SEP_dom_sf"/>
</dbReference>
<dbReference type="InterPro" id="IPR012989">
    <property type="entry name" value="SEP_domain"/>
</dbReference>
<dbReference type="InterPro" id="IPR029071">
    <property type="entry name" value="Ubiquitin-like_domsf"/>
</dbReference>
<dbReference type="InterPro" id="IPR001012">
    <property type="entry name" value="UBX_dom"/>
</dbReference>
<dbReference type="PANTHER" id="PTHR23333">
    <property type="entry name" value="UBX DOMAIN CONTAINING PROTEIN"/>
    <property type="match status" value="1"/>
</dbReference>
<dbReference type="PANTHER" id="PTHR23333:SF14">
    <property type="entry name" value="UBX DOMAIN-CONTAINING PROTEIN 2B"/>
    <property type="match status" value="1"/>
</dbReference>
<dbReference type="Pfam" id="PF08059">
    <property type="entry name" value="SEP"/>
    <property type="match status" value="1"/>
</dbReference>
<dbReference type="Pfam" id="PF00789">
    <property type="entry name" value="UBX"/>
    <property type="match status" value="1"/>
</dbReference>
<dbReference type="SMART" id="SM00553">
    <property type="entry name" value="SEP"/>
    <property type="match status" value="1"/>
</dbReference>
<dbReference type="SMART" id="SM00166">
    <property type="entry name" value="UBX"/>
    <property type="match status" value="1"/>
</dbReference>
<dbReference type="SUPFAM" id="SSF102848">
    <property type="entry name" value="NSFL1 (p97 ATPase) cofactor p47, SEP domain"/>
    <property type="match status" value="1"/>
</dbReference>
<dbReference type="SUPFAM" id="SSF54236">
    <property type="entry name" value="Ubiquitin-like"/>
    <property type="match status" value="1"/>
</dbReference>
<dbReference type="PROSITE" id="PS51399">
    <property type="entry name" value="SEP"/>
    <property type="match status" value="1"/>
</dbReference>
<dbReference type="PROSITE" id="PS50033">
    <property type="entry name" value="UBX"/>
    <property type="match status" value="1"/>
</dbReference>
<protein>
    <recommendedName>
        <fullName>UBX domain-containing protein 2B</fullName>
    </recommendedName>
    <alternativeName>
        <fullName>NSFL1 cofactor p37</fullName>
    </alternativeName>
    <alternativeName>
        <fullName>p97 cofactor p37</fullName>
    </alternativeName>
</protein>
<accession>Q0P3R5</accession>
<accession>Q5PPW1</accession>
<feature type="chain" id="PRO_0000315232" description="UBX domain-containing protein 2B">
    <location>
        <begin position="1"/>
        <end position="350"/>
    </location>
</feature>
<feature type="domain" description="SEP" evidence="5">
    <location>
        <begin position="160"/>
        <end position="225"/>
    </location>
</feature>
<feature type="domain" description="UBX" evidence="4">
    <location>
        <begin position="271"/>
        <end position="348"/>
    </location>
</feature>
<feature type="region of interest" description="Disordered" evidence="6">
    <location>
        <begin position="1"/>
        <end position="46"/>
    </location>
</feature>
<feature type="compositionally biased region" description="Acidic residues" evidence="6">
    <location>
        <begin position="1"/>
        <end position="29"/>
    </location>
</feature>
<feature type="compositionally biased region" description="Basic and acidic residues" evidence="6">
    <location>
        <begin position="32"/>
        <end position="45"/>
    </location>
</feature>
<proteinExistence type="evidence at transcript level"/>
<reference key="1">
    <citation type="submission" date="2006-08" db="EMBL/GenBank/DDBJ databases">
        <authorList>
            <consortium name="NIH - Xenopus Gene Collection (XGC) project"/>
        </authorList>
    </citation>
    <scope>NUCLEOTIDE SEQUENCE [LARGE SCALE MRNA]</scope>
    <source>
        <tissue>Fat body</tissue>
        <tissue>Testis</tissue>
    </source>
</reference>
<gene>
    <name type="primary">ubxn2b</name>
</gene>
<comment type="function">
    <text evidence="3">Adapter protein required for Golgi and endoplasmic reticulum biogenesis. Involved in Golgi and endoplasmic reticulum maintenance during interphase and in their reassembly at the end of mitosis. Regulates the centrosomal levels of kinase aurka-a/Aurora A during mitotic progression by promoting aurka-a removal from centrosomes in prophase. Also, regulates spindle orientation during mitosis.</text>
</comment>
<comment type="subcellular location">
    <subcellularLocation>
        <location evidence="1">Nucleus</location>
    </subcellularLocation>
    <subcellularLocation>
        <location evidence="1">Cytoplasm</location>
        <location evidence="1">Cytosol</location>
    </subcellularLocation>
    <subcellularLocation>
        <location evidence="1">Endoplasmic reticulum</location>
    </subcellularLocation>
    <subcellularLocation>
        <location evidence="1">Golgi apparatus</location>
    </subcellularLocation>
    <subcellularLocation>
        <location evidence="2">Cytoplasm</location>
        <location evidence="2">Cytoskeleton</location>
        <location evidence="2">Microtubule organizing center</location>
        <location evidence="2">Centrosome</location>
    </subcellularLocation>
    <text evidence="2">Localizes to centrosome during mitotic prophase and metaphase.</text>
</comment>
<comment type="similarity">
    <text evidence="7">Belongs to the NSFL1C family.</text>
</comment>
<sequence>MEERENSEEGDDGAGEEEEEDQGSGEDGGEVGAEREQEAELKDSLRPSVLDLQLALARLCEDEYQDQPSKMPVLGLQIKDHQFERSFSGNGKVPSPGKIVNELFKEAKEHGAIPIDDTSKSSGAFYRARTFTGRGYKLGDSSKREFEYMQGEDPFEQGQEIQILLKLWSNGFSLDDGELRSYSDPINAEFLESVKKGEIPVELQRLVHGGQVNLDMEDHQDQEYIKPRLKFKAFSGEGKKLGSVTPEIISTPSSPEEEHKRFLNAEVDLDEHVPTTKIQIRLADGTRLIQRFNLSHRIMDVRQFIIHARSDFAQCDFALLTTFPNVELTDETQTLEEADILNTVILQRLK</sequence>
<name>UBX2B_XENLA</name>